<evidence type="ECO:0000255" key="1">
    <source>
        <dbReference type="HAMAP-Rule" id="MF_00530"/>
    </source>
</evidence>
<gene>
    <name evidence="1" type="primary">atpC</name>
    <name type="ordered locus">YPA_4165</name>
</gene>
<accession>Q1C096</accession>
<protein>
    <recommendedName>
        <fullName evidence="1">ATP synthase epsilon chain</fullName>
    </recommendedName>
    <alternativeName>
        <fullName evidence="1">ATP synthase F1 sector epsilon subunit</fullName>
    </alternativeName>
    <alternativeName>
        <fullName evidence="1">F-ATPase epsilon subunit</fullName>
    </alternativeName>
</protein>
<organism>
    <name type="scientific">Yersinia pestis bv. Antiqua (strain Antiqua)</name>
    <dbReference type="NCBI Taxonomy" id="360102"/>
    <lineage>
        <taxon>Bacteria</taxon>
        <taxon>Pseudomonadati</taxon>
        <taxon>Pseudomonadota</taxon>
        <taxon>Gammaproteobacteria</taxon>
        <taxon>Enterobacterales</taxon>
        <taxon>Yersiniaceae</taxon>
        <taxon>Yersinia</taxon>
    </lineage>
</organism>
<proteinExistence type="inferred from homology"/>
<feature type="chain" id="PRO_0000265928" description="ATP synthase epsilon chain">
    <location>
        <begin position="1"/>
        <end position="137"/>
    </location>
</feature>
<comment type="function">
    <text evidence="1">Produces ATP from ADP in the presence of a proton gradient across the membrane.</text>
</comment>
<comment type="subunit">
    <text>F-type ATPases have 2 components, CF(1) - the catalytic core - and CF(0) - the membrane proton channel. CF(1) has five subunits: alpha(3), beta(3), gamma(1), delta(1), epsilon(1). CF(0) has three main subunits: a, b and c.</text>
</comment>
<comment type="subcellular location">
    <subcellularLocation>
        <location evidence="1">Cell inner membrane</location>
        <topology evidence="1">Peripheral membrane protein</topology>
    </subcellularLocation>
</comment>
<comment type="similarity">
    <text evidence="1">Belongs to the ATPase epsilon chain family.</text>
</comment>
<name>ATPE_YERPA</name>
<keyword id="KW-0066">ATP synthesis</keyword>
<keyword id="KW-0997">Cell inner membrane</keyword>
<keyword id="KW-1003">Cell membrane</keyword>
<keyword id="KW-0139">CF(1)</keyword>
<keyword id="KW-0375">Hydrogen ion transport</keyword>
<keyword id="KW-0406">Ion transport</keyword>
<keyword id="KW-0472">Membrane</keyword>
<keyword id="KW-0813">Transport</keyword>
<reference key="1">
    <citation type="journal article" date="2006" name="J. Bacteriol.">
        <title>Complete genome sequence of Yersinia pestis strains Antiqua and Nepal516: evidence of gene reduction in an emerging pathogen.</title>
        <authorList>
            <person name="Chain P.S.G."/>
            <person name="Hu P."/>
            <person name="Malfatti S.A."/>
            <person name="Radnedge L."/>
            <person name="Larimer F."/>
            <person name="Vergez L.M."/>
            <person name="Worsham P."/>
            <person name="Chu M.C."/>
            <person name="Andersen G.L."/>
        </authorList>
    </citation>
    <scope>NUCLEOTIDE SEQUENCE [LARGE SCALE GENOMIC DNA]</scope>
    <source>
        <strain>Antiqua</strain>
    </source>
</reference>
<sequence length="137" mass="14843">MTYHLDVVSAEKKMFSGVVQKIQVTGSEGELGIFPGHAPLLTAIKPGMIRIVKQFGEEEFIYLSGGILEVQPSVVIVLADTAIRGLDLDEARALESKRKAEAHINNSHGDVDYAQASAELAKAIAKLRVIELTKKAM</sequence>
<dbReference type="EMBL" id="CP000308">
    <property type="protein sequence ID" value="ABG16126.1"/>
    <property type="molecule type" value="Genomic_DNA"/>
</dbReference>
<dbReference type="SMR" id="Q1C096"/>
<dbReference type="KEGG" id="ypa:YPA_4165"/>
<dbReference type="Proteomes" id="UP000001971">
    <property type="component" value="Chromosome"/>
</dbReference>
<dbReference type="GO" id="GO:0005886">
    <property type="term" value="C:plasma membrane"/>
    <property type="evidence" value="ECO:0007669"/>
    <property type="project" value="UniProtKB-SubCell"/>
</dbReference>
<dbReference type="GO" id="GO:0045259">
    <property type="term" value="C:proton-transporting ATP synthase complex"/>
    <property type="evidence" value="ECO:0007669"/>
    <property type="project" value="UniProtKB-KW"/>
</dbReference>
<dbReference type="GO" id="GO:0005524">
    <property type="term" value="F:ATP binding"/>
    <property type="evidence" value="ECO:0007669"/>
    <property type="project" value="UniProtKB-UniRule"/>
</dbReference>
<dbReference type="GO" id="GO:0046933">
    <property type="term" value="F:proton-transporting ATP synthase activity, rotational mechanism"/>
    <property type="evidence" value="ECO:0007669"/>
    <property type="project" value="UniProtKB-UniRule"/>
</dbReference>
<dbReference type="CDD" id="cd12152">
    <property type="entry name" value="F1-ATPase_delta"/>
    <property type="match status" value="1"/>
</dbReference>
<dbReference type="FunFam" id="1.20.5.440:FF:000001">
    <property type="entry name" value="ATP synthase epsilon chain"/>
    <property type="match status" value="1"/>
</dbReference>
<dbReference type="FunFam" id="2.60.15.10:FF:000001">
    <property type="entry name" value="ATP synthase epsilon chain"/>
    <property type="match status" value="1"/>
</dbReference>
<dbReference type="Gene3D" id="1.20.5.440">
    <property type="entry name" value="ATP synthase delta/epsilon subunit, C-terminal domain"/>
    <property type="match status" value="1"/>
</dbReference>
<dbReference type="Gene3D" id="2.60.15.10">
    <property type="entry name" value="F0F1 ATP synthase delta/epsilon subunit, N-terminal"/>
    <property type="match status" value="1"/>
</dbReference>
<dbReference type="HAMAP" id="MF_00530">
    <property type="entry name" value="ATP_synth_epsil_bac"/>
    <property type="match status" value="1"/>
</dbReference>
<dbReference type="InterPro" id="IPR036794">
    <property type="entry name" value="ATP_F1_dsu/esu_C_sf"/>
</dbReference>
<dbReference type="InterPro" id="IPR001469">
    <property type="entry name" value="ATP_synth_F1_dsu/esu"/>
</dbReference>
<dbReference type="InterPro" id="IPR020546">
    <property type="entry name" value="ATP_synth_F1_dsu/esu_N"/>
</dbReference>
<dbReference type="InterPro" id="IPR020547">
    <property type="entry name" value="ATP_synth_F1_esu_C"/>
</dbReference>
<dbReference type="InterPro" id="IPR036771">
    <property type="entry name" value="ATPsynth_dsu/esu_N"/>
</dbReference>
<dbReference type="NCBIfam" id="TIGR01216">
    <property type="entry name" value="ATP_synt_epsi"/>
    <property type="match status" value="1"/>
</dbReference>
<dbReference type="NCBIfam" id="NF001847">
    <property type="entry name" value="PRK00571.1-4"/>
    <property type="match status" value="1"/>
</dbReference>
<dbReference type="PANTHER" id="PTHR13822">
    <property type="entry name" value="ATP SYNTHASE DELTA/EPSILON CHAIN"/>
    <property type="match status" value="1"/>
</dbReference>
<dbReference type="PANTHER" id="PTHR13822:SF10">
    <property type="entry name" value="ATP SYNTHASE EPSILON CHAIN, CHLOROPLASTIC"/>
    <property type="match status" value="1"/>
</dbReference>
<dbReference type="Pfam" id="PF00401">
    <property type="entry name" value="ATP-synt_DE"/>
    <property type="match status" value="1"/>
</dbReference>
<dbReference type="Pfam" id="PF02823">
    <property type="entry name" value="ATP-synt_DE_N"/>
    <property type="match status" value="1"/>
</dbReference>
<dbReference type="SUPFAM" id="SSF46604">
    <property type="entry name" value="Epsilon subunit of F1F0-ATP synthase C-terminal domain"/>
    <property type="match status" value="1"/>
</dbReference>
<dbReference type="SUPFAM" id="SSF51344">
    <property type="entry name" value="Epsilon subunit of F1F0-ATP synthase N-terminal domain"/>
    <property type="match status" value="1"/>
</dbReference>